<evidence type="ECO:0000255" key="1">
    <source>
        <dbReference type="HAMAP-Rule" id="MF_01139"/>
    </source>
</evidence>
<dbReference type="EC" id="2.5.1.-" evidence="1"/>
<dbReference type="EMBL" id="AE017180">
    <property type="protein sequence ID" value="AAR35293.1"/>
    <property type="molecule type" value="Genomic_DNA"/>
</dbReference>
<dbReference type="RefSeq" id="NP_952966.1">
    <property type="nucleotide sequence ID" value="NC_002939.5"/>
</dbReference>
<dbReference type="RefSeq" id="WP_010942562.1">
    <property type="nucleotide sequence ID" value="NC_002939.5"/>
</dbReference>
<dbReference type="SMR" id="P60482"/>
<dbReference type="FunCoup" id="P60482">
    <property type="interactions" value="490"/>
</dbReference>
<dbReference type="STRING" id="243231.GSU1917"/>
<dbReference type="EnsemblBacteria" id="AAR35293">
    <property type="protein sequence ID" value="AAR35293"/>
    <property type="gene ID" value="GSU1917"/>
</dbReference>
<dbReference type="KEGG" id="gsu:GSU1917"/>
<dbReference type="PATRIC" id="fig|243231.5.peg.1955"/>
<dbReference type="eggNOG" id="COG0020">
    <property type="taxonomic scope" value="Bacteria"/>
</dbReference>
<dbReference type="HOGENOM" id="CLU_038505_1_1_7"/>
<dbReference type="InParanoid" id="P60482"/>
<dbReference type="OrthoDB" id="4191603at2"/>
<dbReference type="Proteomes" id="UP000000577">
    <property type="component" value="Chromosome"/>
</dbReference>
<dbReference type="GO" id="GO:0005829">
    <property type="term" value="C:cytosol"/>
    <property type="evidence" value="ECO:0000318"/>
    <property type="project" value="GO_Central"/>
</dbReference>
<dbReference type="GO" id="GO:0008834">
    <property type="term" value="F:ditrans,polycis-undecaprenyl-diphosphate synthase [(2E,6E)-farnesyl-diphosphate specific] activity"/>
    <property type="evidence" value="ECO:0000318"/>
    <property type="project" value="GO_Central"/>
</dbReference>
<dbReference type="GO" id="GO:0000287">
    <property type="term" value="F:magnesium ion binding"/>
    <property type="evidence" value="ECO:0000318"/>
    <property type="project" value="GO_Central"/>
</dbReference>
<dbReference type="GO" id="GO:0016094">
    <property type="term" value="P:polyprenol biosynthetic process"/>
    <property type="evidence" value="ECO:0000318"/>
    <property type="project" value="GO_Central"/>
</dbReference>
<dbReference type="CDD" id="cd00475">
    <property type="entry name" value="Cis_IPPS"/>
    <property type="match status" value="1"/>
</dbReference>
<dbReference type="FunFam" id="3.40.1180.10:FF:000001">
    <property type="entry name" value="(2E,6E)-farnesyl-diphosphate-specific ditrans,polycis-undecaprenyl-diphosphate synthase"/>
    <property type="match status" value="1"/>
</dbReference>
<dbReference type="Gene3D" id="3.40.1180.10">
    <property type="entry name" value="Decaprenyl diphosphate synthase-like"/>
    <property type="match status" value="1"/>
</dbReference>
<dbReference type="HAMAP" id="MF_01139">
    <property type="entry name" value="ISPT"/>
    <property type="match status" value="1"/>
</dbReference>
<dbReference type="InterPro" id="IPR001441">
    <property type="entry name" value="UPP_synth-like"/>
</dbReference>
<dbReference type="InterPro" id="IPR018520">
    <property type="entry name" value="UPP_synth-like_CS"/>
</dbReference>
<dbReference type="InterPro" id="IPR036424">
    <property type="entry name" value="UPP_synth-like_sf"/>
</dbReference>
<dbReference type="NCBIfam" id="NF011405">
    <property type="entry name" value="PRK14830.1"/>
    <property type="match status" value="1"/>
</dbReference>
<dbReference type="NCBIfam" id="TIGR00055">
    <property type="entry name" value="uppS"/>
    <property type="match status" value="1"/>
</dbReference>
<dbReference type="PANTHER" id="PTHR10291:SF0">
    <property type="entry name" value="DEHYDRODOLICHYL DIPHOSPHATE SYNTHASE 2"/>
    <property type="match status" value="1"/>
</dbReference>
<dbReference type="PANTHER" id="PTHR10291">
    <property type="entry name" value="DEHYDRODOLICHYL DIPHOSPHATE SYNTHASE FAMILY MEMBER"/>
    <property type="match status" value="1"/>
</dbReference>
<dbReference type="Pfam" id="PF01255">
    <property type="entry name" value="Prenyltransf"/>
    <property type="match status" value="1"/>
</dbReference>
<dbReference type="SUPFAM" id="SSF64005">
    <property type="entry name" value="Undecaprenyl diphosphate synthase"/>
    <property type="match status" value="1"/>
</dbReference>
<dbReference type="PROSITE" id="PS01066">
    <property type="entry name" value="UPP_SYNTHASE"/>
    <property type="match status" value="1"/>
</dbReference>
<proteinExistence type="inferred from homology"/>
<accession>P60482</accession>
<comment type="function">
    <text evidence="1">Catalyzes the condensation of isopentenyl diphosphate (IPP) with allylic pyrophosphates generating different type of terpenoids.</text>
</comment>
<comment type="cofactor">
    <cofactor evidence="1">
        <name>Mg(2+)</name>
        <dbReference type="ChEBI" id="CHEBI:18420"/>
    </cofactor>
    <text evidence="1">Binds 2 magnesium ions per subunit.</text>
</comment>
<comment type="subunit">
    <text evidence="1">Homodimer.</text>
</comment>
<comment type="similarity">
    <text evidence="1">Belongs to the UPP synthase family.</text>
</comment>
<sequence>MHGLIPDKLPRHLAIIMDGNGRWAQERMLTRIIGHQKGVETVRIIVEECSRLGIGYLTLFAFSAENWLRPKTEVKALMALLKKYIASEAARMDANNIRFNVIGNRDELPPDVNKAVQGAIDRTSGNTGMILTLALSYGARQEIMTAATRIASDIASGVLKADDLSETAFASYLFTSGLPDPDFLIRTSGEMRISNFLLWQLAYTEFYFSSVNWPEFTPEELYRALSDYQARERRFGRTSAQINTRS</sequence>
<keyword id="KW-0460">Magnesium</keyword>
<keyword id="KW-0479">Metal-binding</keyword>
<keyword id="KW-1185">Reference proteome</keyword>
<keyword id="KW-0808">Transferase</keyword>
<feature type="chain" id="PRO_0000123617" description="Isoprenyl transferase">
    <location>
        <begin position="1"/>
        <end position="246"/>
    </location>
</feature>
<feature type="active site" evidence="1">
    <location>
        <position position="18"/>
    </location>
</feature>
<feature type="active site" description="Proton acceptor" evidence="1">
    <location>
        <position position="66"/>
    </location>
</feature>
<feature type="binding site" evidence="1">
    <location>
        <position position="18"/>
    </location>
    <ligand>
        <name>Mg(2+)</name>
        <dbReference type="ChEBI" id="CHEBI:18420"/>
    </ligand>
</feature>
<feature type="binding site" evidence="1">
    <location>
        <begin position="19"/>
        <end position="22"/>
    </location>
    <ligand>
        <name>substrate</name>
    </ligand>
</feature>
<feature type="binding site" evidence="1">
    <location>
        <position position="23"/>
    </location>
    <ligand>
        <name>substrate</name>
    </ligand>
</feature>
<feature type="binding site" evidence="1">
    <location>
        <position position="31"/>
    </location>
    <ligand>
        <name>substrate</name>
    </ligand>
</feature>
<feature type="binding site" evidence="1">
    <location>
        <position position="35"/>
    </location>
    <ligand>
        <name>substrate</name>
    </ligand>
</feature>
<feature type="binding site" evidence="1">
    <location>
        <begin position="63"/>
        <end position="65"/>
    </location>
    <ligand>
        <name>substrate</name>
    </ligand>
</feature>
<feature type="binding site" evidence="1">
    <location>
        <position position="67"/>
    </location>
    <ligand>
        <name>substrate</name>
    </ligand>
</feature>
<feature type="binding site" evidence="1">
    <location>
        <position position="69"/>
    </location>
    <ligand>
        <name>substrate</name>
    </ligand>
</feature>
<feature type="binding site" evidence="1">
    <location>
        <position position="186"/>
    </location>
    <ligand>
        <name>substrate</name>
    </ligand>
</feature>
<feature type="binding site" evidence="1">
    <location>
        <begin position="192"/>
        <end position="194"/>
    </location>
    <ligand>
        <name>substrate</name>
    </ligand>
</feature>
<feature type="binding site" evidence="1">
    <location>
        <position position="205"/>
    </location>
    <ligand>
        <name>Mg(2+)</name>
        <dbReference type="ChEBI" id="CHEBI:18420"/>
    </ligand>
</feature>
<organism>
    <name type="scientific">Geobacter sulfurreducens (strain ATCC 51573 / DSM 12127 / PCA)</name>
    <dbReference type="NCBI Taxonomy" id="243231"/>
    <lineage>
        <taxon>Bacteria</taxon>
        <taxon>Pseudomonadati</taxon>
        <taxon>Thermodesulfobacteriota</taxon>
        <taxon>Desulfuromonadia</taxon>
        <taxon>Geobacterales</taxon>
        <taxon>Geobacteraceae</taxon>
        <taxon>Geobacter</taxon>
    </lineage>
</organism>
<name>ISPT_GEOSL</name>
<protein>
    <recommendedName>
        <fullName evidence="1">Isoprenyl transferase</fullName>
        <ecNumber evidence="1">2.5.1.-</ecNumber>
    </recommendedName>
</protein>
<gene>
    <name evidence="1" type="primary">uppS</name>
    <name type="ordered locus">GSU1917</name>
</gene>
<reference key="1">
    <citation type="journal article" date="2003" name="Science">
        <title>Genome of Geobacter sulfurreducens: metal reduction in subsurface environments.</title>
        <authorList>
            <person name="Methe B.A."/>
            <person name="Nelson K.E."/>
            <person name="Eisen J.A."/>
            <person name="Paulsen I.T."/>
            <person name="Nelson W.C."/>
            <person name="Heidelberg J.F."/>
            <person name="Wu D."/>
            <person name="Wu M."/>
            <person name="Ward N.L."/>
            <person name="Beanan M.J."/>
            <person name="Dodson R.J."/>
            <person name="Madupu R."/>
            <person name="Brinkac L.M."/>
            <person name="Daugherty S.C."/>
            <person name="DeBoy R.T."/>
            <person name="Durkin A.S."/>
            <person name="Gwinn M.L."/>
            <person name="Kolonay J.F."/>
            <person name="Sullivan S.A."/>
            <person name="Haft D.H."/>
            <person name="Selengut J."/>
            <person name="Davidsen T.M."/>
            <person name="Zafar N."/>
            <person name="White O."/>
            <person name="Tran B."/>
            <person name="Romero C."/>
            <person name="Forberger H.A."/>
            <person name="Weidman J.F."/>
            <person name="Khouri H.M."/>
            <person name="Feldblyum T.V."/>
            <person name="Utterback T.R."/>
            <person name="Van Aken S.E."/>
            <person name="Lovley D.R."/>
            <person name="Fraser C.M."/>
        </authorList>
    </citation>
    <scope>NUCLEOTIDE SEQUENCE [LARGE SCALE GENOMIC DNA]</scope>
    <source>
        <strain>ATCC 51573 / DSM 12127 / PCA</strain>
    </source>
</reference>